<sequence length="72" mass="8214">MQDLSLEARLAELESRLAFQEITIEELNVTVTAHEMEMAKLRDHLRLLTEKLKASQPSNIASQAEETPPPHY</sequence>
<gene>
    <name type="primary">slyX</name>
    <name type="ordered locus">Z4706</name>
    <name type="ordered locus">ECs4199</name>
</gene>
<evidence type="ECO:0000256" key="1">
    <source>
        <dbReference type="SAM" id="MobiDB-lite"/>
    </source>
</evidence>
<evidence type="ECO:0000305" key="2"/>
<dbReference type="EMBL" id="AE005174">
    <property type="protein sequence ID" value="AAG58455.1"/>
    <property type="molecule type" value="Genomic_DNA"/>
</dbReference>
<dbReference type="EMBL" id="BA000007">
    <property type="protein sequence ID" value="BAB37622.1"/>
    <property type="molecule type" value="Genomic_DNA"/>
</dbReference>
<dbReference type="PIR" id="C85999">
    <property type="entry name" value="C85999"/>
</dbReference>
<dbReference type="PIR" id="G91153">
    <property type="entry name" value="G91153"/>
</dbReference>
<dbReference type="RefSeq" id="NP_312226.1">
    <property type="nucleotide sequence ID" value="NC_002695.1"/>
</dbReference>
<dbReference type="RefSeq" id="WP_001153615.1">
    <property type="nucleotide sequence ID" value="NZ_VOAI01000004.1"/>
</dbReference>
<dbReference type="SMR" id="P0A8R6"/>
<dbReference type="STRING" id="155864.Z4706"/>
<dbReference type="GeneID" id="915948"/>
<dbReference type="KEGG" id="ece:Z4706"/>
<dbReference type="KEGG" id="ecs:ECs_4199"/>
<dbReference type="PATRIC" id="fig|386585.9.peg.4382"/>
<dbReference type="eggNOG" id="COG2900">
    <property type="taxonomic scope" value="Bacteria"/>
</dbReference>
<dbReference type="HOGENOM" id="CLU_180796_4_2_6"/>
<dbReference type="OMA" id="CQLAFQE"/>
<dbReference type="Proteomes" id="UP000000558">
    <property type="component" value="Chromosome"/>
</dbReference>
<dbReference type="Proteomes" id="UP000002519">
    <property type="component" value="Chromosome"/>
</dbReference>
<dbReference type="Gene3D" id="1.20.5.300">
    <property type="match status" value="1"/>
</dbReference>
<dbReference type="HAMAP" id="MF_00715">
    <property type="entry name" value="SlyX"/>
    <property type="match status" value="1"/>
</dbReference>
<dbReference type="InterPro" id="IPR007236">
    <property type="entry name" value="SlyX"/>
</dbReference>
<dbReference type="NCBIfam" id="NF002750">
    <property type="entry name" value="PRK02793.1"/>
    <property type="match status" value="1"/>
</dbReference>
<dbReference type="PANTHER" id="PTHR36508">
    <property type="entry name" value="PROTEIN SLYX"/>
    <property type="match status" value="1"/>
</dbReference>
<dbReference type="PANTHER" id="PTHR36508:SF1">
    <property type="entry name" value="PROTEIN SLYX"/>
    <property type="match status" value="1"/>
</dbReference>
<dbReference type="Pfam" id="PF04102">
    <property type="entry name" value="SlyX"/>
    <property type="match status" value="1"/>
</dbReference>
<organism>
    <name type="scientific">Escherichia coli O157:H7</name>
    <dbReference type="NCBI Taxonomy" id="83334"/>
    <lineage>
        <taxon>Bacteria</taxon>
        <taxon>Pseudomonadati</taxon>
        <taxon>Pseudomonadota</taxon>
        <taxon>Gammaproteobacteria</taxon>
        <taxon>Enterobacterales</taxon>
        <taxon>Enterobacteriaceae</taxon>
        <taxon>Escherichia</taxon>
    </lineage>
</organism>
<reference key="1">
    <citation type="journal article" date="2001" name="Nature">
        <title>Genome sequence of enterohaemorrhagic Escherichia coli O157:H7.</title>
        <authorList>
            <person name="Perna N.T."/>
            <person name="Plunkett G. III"/>
            <person name="Burland V."/>
            <person name="Mau B."/>
            <person name="Glasner J.D."/>
            <person name="Rose D.J."/>
            <person name="Mayhew G.F."/>
            <person name="Evans P.S."/>
            <person name="Gregor J."/>
            <person name="Kirkpatrick H.A."/>
            <person name="Posfai G."/>
            <person name="Hackett J."/>
            <person name="Klink S."/>
            <person name="Boutin A."/>
            <person name="Shao Y."/>
            <person name="Miller L."/>
            <person name="Grotbeck E.J."/>
            <person name="Davis N.W."/>
            <person name="Lim A."/>
            <person name="Dimalanta E.T."/>
            <person name="Potamousis K."/>
            <person name="Apodaca J."/>
            <person name="Anantharaman T.S."/>
            <person name="Lin J."/>
            <person name="Yen G."/>
            <person name="Schwartz D.C."/>
            <person name="Welch R.A."/>
            <person name="Blattner F.R."/>
        </authorList>
    </citation>
    <scope>NUCLEOTIDE SEQUENCE [LARGE SCALE GENOMIC DNA]</scope>
    <source>
        <strain>O157:H7 / EDL933 / ATCC 700927 / EHEC</strain>
    </source>
</reference>
<reference key="2">
    <citation type="journal article" date="2001" name="DNA Res.">
        <title>Complete genome sequence of enterohemorrhagic Escherichia coli O157:H7 and genomic comparison with a laboratory strain K-12.</title>
        <authorList>
            <person name="Hayashi T."/>
            <person name="Makino K."/>
            <person name="Ohnishi M."/>
            <person name="Kurokawa K."/>
            <person name="Ishii K."/>
            <person name="Yokoyama K."/>
            <person name="Han C.-G."/>
            <person name="Ohtsubo E."/>
            <person name="Nakayama K."/>
            <person name="Murata T."/>
            <person name="Tanaka M."/>
            <person name="Tobe T."/>
            <person name="Iida T."/>
            <person name="Takami H."/>
            <person name="Honda T."/>
            <person name="Sasakawa C."/>
            <person name="Ogasawara N."/>
            <person name="Yasunaga T."/>
            <person name="Kuhara S."/>
            <person name="Shiba T."/>
            <person name="Hattori M."/>
            <person name="Shinagawa H."/>
        </authorList>
    </citation>
    <scope>NUCLEOTIDE SEQUENCE [LARGE SCALE GENOMIC DNA]</scope>
    <source>
        <strain>O157:H7 / Sakai / RIMD 0509952 / EHEC</strain>
    </source>
</reference>
<feature type="chain" id="PRO_0000209201" description="Protein SlyX">
    <location>
        <begin position="1"/>
        <end position="72"/>
    </location>
</feature>
<feature type="region of interest" description="Disordered" evidence="1">
    <location>
        <begin position="52"/>
        <end position="72"/>
    </location>
</feature>
<feature type="compositionally biased region" description="Polar residues" evidence="1">
    <location>
        <begin position="55"/>
        <end position="65"/>
    </location>
</feature>
<keyword id="KW-1185">Reference proteome</keyword>
<comment type="similarity">
    <text evidence="2">Belongs to the SlyX family.</text>
</comment>
<protein>
    <recommendedName>
        <fullName>Protein SlyX</fullName>
    </recommendedName>
</protein>
<proteinExistence type="inferred from homology"/>
<accession>P0A8R6</accession>
<accession>P30857</accession>
<name>SLYX_ECO57</name>